<evidence type="ECO:0000250" key="1">
    <source>
        <dbReference type="UniProtKB" id="P06922"/>
    </source>
</evidence>
<evidence type="ECO:0000256" key="2">
    <source>
        <dbReference type="SAM" id="MobiDB-lite"/>
    </source>
</evidence>
<evidence type="ECO:0000305" key="3"/>
<organism>
    <name type="scientific">Human papillomavirus type 2a</name>
    <dbReference type="NCBI Taxonomy" id="10584"/>
    <lineage>
        <taxon>Viruses</taxon>
        <taxon>Monodnaviria</taxon>
        <taxon>Shotokuvirae</taxon>
        <taxon>Cossaviricota</taxon>
        <taxon>Papovaviricetes</taxon>
        <taxon>Zurhausenvirales</taxon>
        <taxon>Papillomaviridae</taxon>
        <taxon>Firstpapillomavirinae</taxon>
        <taxon>Alphapapillomavirus</taxon>
        <taxon>Alphapapillomavirus 4</taxon>
    </lineage>
</organism>
<comment type="function">
    <text evidence="1">Contributes to multiple aspects of the viral life cycle including viral genome amplification, suppression of suprabasal cell differentiation and egress of newly formed virions. Induces host cell cycle arrest at the G2 phase by associating with and preventing the nuclear entry of host CDK1/cyclin B1 complexes. Inhibits cellular DNA replication by preventing loading of host replication licensing proteins MCM2 and MCM7 onto chromatin. Within the cytoplasm, associates with host kinase SRPK1, a splicing factor regulator, and inhibits its activity. Therefore, E4 favors expression of late viral transcripts by inhibiting SRPK1-mediated phosphorylation of host serine-arginine (SR) proteins that have critical roles in mRNA metabolism. Late in the infectious cycle, E4 also acts to diminish the integrity of the keratinocyte by disrupting the keratin cytoskeleton and inducing apoptosis through alteration of mitochondrial function to facilitate egress of the newly formed virions.</text>
</comment>
<comment type="subunit">
    <text evidence="1">Assembles into oligomeric complexes. Interacts with host CDK1. Interacts with host SRPK1; this interaction may favor expression of late viral transcripts. Interacts with host cytokeratin components KRT8 and KRT18.</text>
</comment>
<comment type="subcellular location">
    <subcellularLocation>
        <location evidence="1">Host cytoplasm</location>
    </subcellularLocation>
    <subcellularLocation>
        <location evidence="1">Host nucleus</location>
    </subcellularLocation>
</comment>
<comment type="PTM">
    <text evidence="1">Phosphorylated by host ERK. The phosphorylation triggers a structural change that enhances keratin binding and protein stability.</text>
</comment>
<comment type="miscellaneous">
    <text evidence="1">The major E4 form is first synthesized as an E1^E4 fusion protein from spliced E1^E4 transcripts, such that the first few amino acids of the E4 protein are derived from the N terminus of E1.</text>
</comment>
<comment type="similarity">
    <text evidence="3">Belongs to the papillomaviridae E4 protein family.</text>
</comment>
<reference key="1">
    <citation type="journal article" date="1990" name="Virus Res.">
        <title>A comparative sequence analysis of two human papillomavirus (HPV) types 2a and 57.</title>
        <authorList>
            <person name="Hirsch-Behnam A."/>
            <person name="Delius H."/>
            <person name="de Villiers E.M."/>
        </authorList>
    </citation>
    <scope>NUCLEOTIDE SEQUENCE [GENOMIC DNA]</scope>
</reference>
<feature type="chain" id="PRO_0000133255" description="Protein E4">
    <location>
        <begin position="1"/>
        <end position="113"/>
    </location>
</feature>
<feature type="region of interest" description="Disordered" evidence="2">
    <location>
        <begin position="24"/>
        <end position="89"/>
    </location>
</feature>
<feature type="compositionally biased region" description="Low complexity" evidence="2">
    <location>
        <begin position="24"/>
        <end position="38"/>
    </location>
</feature>
<feature type="compositionally biased region" description="Basic residues" evidence="2">
    <location>
        <begin position="46"/>
        <end position="60"/>
    </location>
</feature>
<feature type="compositionally biased region" description="Low complexity" evidence="2">
    <location>
        <begin position="61"/>
        <end position="75"/>
    </location>
</feature>
<name>VE4_HPV2A</name>
<organismHost>
    <name type="scientific">Homo sapiens</name>
    <name type="common">Human</name>
    <dbReference type="NCBI Taxonomy" id="9606"/>
</organismHost>
<gene>
    <name type="primary">E4</name>
</gene>
<sequence>MEDSAAPRPAPRTTNHYPLLELLYPQSQPQSQPQQNQQEQEEQLRPPKRCAPPRRQRVRRPSASVSSSDSSIPGPTLRERSERGKWSVTTSGASVTLTAQTPGGATVTLTLCL</sequence>
<protein>
    <recommendedName>
        <fullName>Protein E4</fullName>
    </recommendedName>
</protein>
<keyword id="KW-0244">Early protein</keyword>
<keyword id="KW-1035">Host cytoplasm</keyword>
<keyword id="KW-1079">Host G2/M cell cycle arrest by virus</keyword>
<keyword id="KW-1048">Host nucleus</keyword>
<keyword id="KW-0945">Host-virus interaction</keyword>
<keyword id="KW-1121">Modulation of host cell cycle by virus</keyword>
<keyword id="KW-0597">Phosphoprotein</keyword>
<dbReference type="EMBL" id="X55964">
    <property type="status" value="NOT_ANNOTATED_CDS"/>
    <property type="molecule type" value="Genomic_DNA"/>
</dbReference>
<dbReference type="PIR" id="S15618">
    <property type="entry name" value="S15618"/>
</dbReference>
<dbReference type="Proteomes" id="UP000007710">
    <property type="component" value="Segment"/>
</dbReference>
<dbReference type="GO" id="GO:0030430">
    <property type="term" value="C:host cell cytoplasm"/>
    <property type="evidence" value="ECO:0007669"/>
    <property type="project" value="UniProtKB-SubCell"/>
</dbReference>
<dbReference type="GO" id="GO:0042025">
    <property type="term" value="C:host cell nucleus"/>
    <property type="evidence" value="ECO:0007669"/>
    <property type="project" value="UniProtKB-SubCell"/>
</dbReference>
<dbReference type="GO" id="GO:0039592">
    <property type="term" value="P:symbiont-mediated arrest of host cell cycle during G2/M transition"/>
    <property type="evidence" value="ECO:0007669"/>
    <property type="project" value="UniProtKB-KW"/>
</dbReference>
<dbReference type="InterPro" id="IPR003861">
    <property type="entry name" value="Papilloma_E4"/>
</dbReference>
<dbReference type="Pfam" id="PF02711">
    <property type="entry name" value="Pap_E4"/>
    <property type="match status" value="1"/>
</dbReference>
<accession>P25483</accession>
<proteinExistence type="inferred from homology"/>